<proteinExistence type="inferred from homology"/>
<organism>
    <name type="scientific">Gloeobacter violaceus (strain ATCC 29082 / PCC 7421)</name>
    <dbReference type="NCBI Taxonomy" id="251221"/>
    <lineage>
        <taxon>Bacteria</taxon>
        <taxon>Bacillati</taxon>
        <taxon>Cyanobacteriota</taxon>
        <taxon>Cyanophyceae</taxon>
        <taxon>Gloeobacterales</taxon>
        <taxon>Gloeobacteraceae</taxon>
        <taxon>Gloeobacter</taxon>
    </lineage>
</organism>
<comment type="catalytic activity">
    <reaction evidence="1">
        <text>tRNA(Arg) + L-arginine + ATP = L-arginyl-tRNA(Arg) + AMP + diphosphate</text>
        <dbReference type="Rhea" id="RHEA:20301"/>
        <dbReference type="Rhea" id="RHEA-COMP:9658"/>
        <dbReference type="Rhea" id="RHEA-COMP:9673"/>
        <dbReference type="ChEBI" id="CHEBI:30616"/>
        <dbReference type="ChEBI" id="CHEBI:32682"/>
        <dbReference type="ChEBI" id="CHEBI:33019"/>
        <dbReference type="ChEBI" id="CHEBI:78442"/>
        <dbReference type="ChEBI" id="CHEBI:78513"/>
        <dbReference type="ChEBI" id="CHEBI:456215"/>
        <dbReference type="EC" id="6.1.1.19"/>
    </reaction>
</comment>
<comment type="subunit">
    <text evidence="1">Monomer.</text>
</comment>
<comment type="subcellular location">
    <subcellularLocation>
        <location evidence="1">Cytoplasm</location>
    </subcellularLocation>
</comment>
<comment type="similarity">
    <text evidence="1">Belongs to the class-I aminoacyl-tRNA synthetase family.</text>
</comment>
<keyword id="KW-0030">Aminoacyl-tRNA synthetase</keyword>
<keyword id="KW-0067">ATP-binding</keyword>
<keyword id="KW-0963">Cytoplasm</keyword>
<keyword id="KW-0436">Ligase</keyword>
<keyword id="KW-0547">Nucleotide-binding</keyword>
<keyword id="KW-0648">Protein biosynthesis</keyword>
<keyword id="KW-1185">Reference proteome</keyword>
<reference key="1">
    <citation type="journal article" date="2003" name="DNA Res.">
        <title>Complete genome structure of Gloeobacter violaceus PCC 7421, a cyanobacterium that lacks thylakoids.</title>
        <authorList>
            <person name="Nakamura Y."/>
            <person name="Kaneko T."/>
            <person name="Sato S."/>
            <person name="Mimuro M."/>
            <person name="Miyashita H."/>
            <person name="Tsuchiya T."/>
            <person name="Sasamoto S."/>
            <person name="Watanabe A."/>
            <person name="Kawashima K."/>
            <person name="Kishida Y."/>
            <person name="Kiyokawa C."/>
            <person name="Kohara M."/>
            <person name="Matsumoto M."/>
            <person name="Matsuno A."/>
            <person name="Nakazaki N."/>
            <person name="Shimpo S."/>
            <person name="Takeuchi C."/>
            <person name="Yamada M."/>
            <person name="Tabata S."/>
        </authorList>
    </citation>
    <scope>NUCLEOTIDE SEQUENCE [LARGE SCALE GENOMIC DNA]</scope>
    <source>
        <strain>ATCC 29082 / PCC 7421</strain>
    </source>
</reference>
<evidence type="ECO:0000255" key="1">
    <source>
        <dbReference type="HAMAP-Rule" id="MF_00123"/>
    </source>
</evidence>
<gene>
    <name evidence="1" type="primary">argS</name>
    <name type="ordered locus">glr4279</name>
</gene>
<feature type="chain" id="PRO_0000151562" description="Arginine--tRNA ligase">
    <location>
        <begin position="1"/>
        <end position="601"/>
    </location>
</feature>
<feature type="short sequence motif" description="'HIGH' region">
    <location>
        <begin position="135"/>
        <end position="145"/>
    </location>
</feature>
<sequence>MTALSLQQQLAESIYTALGTAFEAGQLGQLTQLPPRQSVVVEKPKVPEHGDYATPVAMSLAKPCRLAPLAIAEAIASYLASDEIGVEVAKPGFINLRLGHRFVAVELQNILELKGDYGRTVPQQPERILLEFVSANPTGPLHLGHGRWAALGSSLERILQFAGYTVDSEFYINDAGNQMQLLGLSLKQRYLQVLGEAVELPDGGYKGSYLKELAEQLVADKGDSLGGEPVEWFSAYAEGRLLEQQKITLQQFRTEFDRWYSERSLHCAGAIEAALADLEARGMLYRAARSRQEQSGEITGRSKKVQAPAAFEEEDGGGEALFFKAADFGDEMDRVVKRADGNTTYLAADIAYHWDKYQRGYGRLINIWGADHHGYVPRMKAVAQALGHPADSLEILIGQMVRLFKTNPETGQKEEMRMSKRRGELVSVDDLIEEVGVDAGRWFLLSQSLNTTVNFDLDLAQSEKFDNPVFYVQYNHARCCSILRKAPERGMPILERFEFLKPDGGLWLETPQERTLALRLLAAPDEYRFAAVDRTPQRLTQYAYDLASDVSQFYEHCPILPPLAENLEPALRYARLGLVVATRQVLATTLTLLGIEPRESM</sequence>
<accession>Q7NDF6</accession>
<protein>
    <recommendedName>
        <fullName evidence="1">Arginine--tRNA ligase</fullName>
        <ecNumber evidence="1">6.1.1.19</ecNumber>
    </recommendedName>
    <alternativeName>
        <fullName evidence="1">Arginyl-tRNA synthetase</fullName>
        <shortName evidence="1">ArgRS</shortName>
    </alternativeName>
</protein>
<dbReference type="EC" id="6.1.1.19" evidence="1"/>
<dbReference type="EMBL" id="BA000045">
    <property type="protein sequence ID" value="BAC92220.1"/>
    <property type="molecule type" value="Genomic_DNA"/>
</dbReference>
<dbReference type="RefSeq" id="NP_927225.1">
    <property type="nucleotide sequence ID" value="NC_005125.1"/>
</dbReference>
<dbReference type="RefSeq" id="WP_011144263.1">
    <property type="nucleotide sequence ID" value="NC_005125.1"/>
</dbReference>
<dbReference type="SMR" id="Q7NDF6"/>
<dbReference type="FunCoup" id="Q7NDF6">
    <property type="interactions" value="346"/>
</dbReference>
<dbReference type="STRING" id="251221.gene:10761798"/>
<dbReference type="EnsemblBacteria" id="BAC92220">
    <property type="protein sequence ID" value="BAC92220"/>
    <property type="gene ID" value="BAC92220"/>
</dbReference>
<dbReference type="KEGG" id="gvi:glr4279"/>
<dbReference type="PATRIC" id="fig|251221.4.peg.4307"/>
<dbReference type="eggNOG" id="COG0018">
    <property type="taxonomic scope" value="Bacteria"/>
</dbReference>
<dbReference type="HOGENOM" id="CLU_006406_0_1_3"/>
<dbReference type="InParanoid" id="Q7NDF6"/>
<dbReference type="OrthoDB" id="9805987at2"/>
<dbReference type="PhylomeDB" id="Q7NDF6"/>
<dbReference type="Proteomes" id="UP000000557">
    <property type="component" value="Chromosome"/>
</dbReference>
<dbReference type="GO" id="GO:0005737">
    <property type="term" value="C:cytoplasm"/>
    <property type="evidence" value="ECO:0007669"/>
    <property type="project" value="UniProtKB-SubCell"/>
</dbReference>
<dbReference type="GO" id="GO:0004814">
    <property type="term" value="F:arginine-tRNA ligase activity"/>
    <property type="evidence" value="ECO:0000318"/>
    <property type="project" value="GO_Central"/>
</dbReference>
<dbReference type="GO" id="GO:0005524">
    <property type="term" value="F:ATP binding"/>
    <property type="evidence" value="ECO:0007669"/>
    <property type="project" value="UniProtKB-UniRule"/>
</dbReference>
<dbReference type="GO" id="GO:0006420">
    <property type="term" value="P:arginyl-tRNA aminoacylation"/>
    <property type="evidence" value="ECO:0000318"/>
    <property type="project" value="GO_Central"/>
</dbReference>
<dbReference type="CDD" id="cd00671">
    <property type="entry name" value="ArgRS_core"/>
    <property type="match status" value="1"/>
</dbReference>
<dbReference type="Gene3D" id="3.30.1360.70">
    <property type="entry name" value="Arginyl tRNA synthetase N-terminal domain"/>
    <property type="match status" value="1"/>
</dbReference>
<dbReference type="Gene3D" id="3.40.50.620">
    <property type="entry name" value="HUPs"/>
    <property type="match status" value="1"/>
</dbReference>
<dbReference type="Gene3D" id="1.10.730.10">
    <property type="entry name" value="Isoleucyl-tRNA Synthetase, Domain 1"/>
    <property type="match status" value="1"/>
</dbReference>
<dbReference type="HAMAP" id="MF_00123">
    <property type="entry name" value="Arg_tRNA_synth"/>
    <property type="match status" value="1"/>
</dbReference>
<dbReference type="InterPro" id="IPR001412">
    <property type="entry name" value="aa-tRNA-synth_I_CS"/>
</dbReference>
<dbReference type="InterPro" id="IPR001278">
    <property type="entry name" value="Arg-tRNA-ligase"/>
</dbReference>
<dbReference type="InterPro" id="IPR005148">
    <property type="entry name" value="Arg-tRNA-synth_N"/>
</dbReference>
<dbReference type="InterPro" id="IPR036695">
    <property type="entry name" value="Arg-tRNA-synth_N_sf"/>
</dbReference>
<dbReference type="InterPro" id="IPR035684">
    <property type="entry name" value="ArgRS_core"/>
</dbReference>
<dbReference type="InterPro" id="IPR008909">
    <property type="entry name" value="DALR_anticod-bd"/>
</dbReference>
<dbReference type="InterPro" id="IPR014729">
    <property type="entry name" value="Rossmann-like_a/b/a_fold"/>
</dbReference>
<dbReference type="InterPro" id="IPR009080">
    <property type="entry name" value="tRNAsynth_Ia_anticodon-bd"/>
</dbReference>
<dbReference type="PANTHER" id="PTHR11956:SF5">
    <property type="entry name" value="ARGININE--TRNA LIGASE, CYTOPLASMIC"/>
    <property type="match status" value="1"/>
</dbReference>
<dbReference type="PANTHER" id="PTHR11956">
    <property type="entry name" value="ARGINYL-TRNA SYNTHETASE"/>
    <property type="match status" value="1"/>
</dbReference>
<dbReference type="Pfam" id="PF03485">
    <property type="entry name" value="Arg_tRNA_synt_N"/>
    <property type="match status" value="1"/>
</dbReference>
<dbReference type="Pfam" id="PF05746">
    <property type="entry name" value="DALR_1"/>
    <property type="match status" value="1"/>
</dbReference>
<dbReference type="Pfam" id="PF00750">
    <property type="entry name" value="tRNA-synt_1d"/>
    <property type="match status" value="1"/>
</dbReference>
<dbReference type="PRINTS" id="PR01038">
    <property type="entry name" value="TRNASYNTHARG"/>
</dbReference>
<dbReference type="SMART" id="SM01016">
    <property type="entry name" value="Arg_tRNA_synt_N"/>
    <property type="match status" value="1"/>
</dbReference>
<dbReference type="SMART" id="SM00836">
    <property type="entry name" value="DALR_1"/>
    <property type="match status" value="1"/>
</dbReference>
<dbReference type="SUPFAM" id="SSF47323">
    <property type="entry name" value="Anticodon-binding domain of a subclass of class I aminoacyl-tRNA synthetases"/>
    <property type="match status" value="1"/>
</dbReference>
<dbReference type="SUPFAM" id="SSF55190">
    <property type="entry name" value="Arginyl-tRNA synthetase (ArgRS), N-terminal 'additional' domain"/>
    <property type="match status" value="1"/>
</dbReference>
<dbReference type="SUPFAM" id="SSF52374">
    <property type="entry name" value="Nucleotidylyl transferase"/>
    <property type="match status" value="1"/>
</dbReference>
<dbReference type="PROSITE" id="PS00178">
    <property type="entry name" value="AA_TRNA_LIGASE_I"/>
    <property type="match status" value="1"/>
</dbReference>
<name>SYR_GLOVI</name>